<accession>B9M9F3</accession>
<dbReference type="EC" id="6.1.1.4" evidence="1"/>
<dbReference type="EMBL" id="CP001390">
    <property type="protein sequence ID" value="ACM20525.1"/>
    <property type="molecule type" value="Genomic_DNA"/>
</dbReference>
<dbReference type="RefSeq" id="WP_012647254.1">
    <property type="nucleotide sequence ID" value="NC_011979.1"/>
</dbReference>
<dbReference type="SMR" id="B9M9F3"/>
<dbReference type="STRING" id="316067.Geob_2171"/>
<dbReference type="KEGG" id="geo:Geob_2171"/>
<dbReference type="eggNOG" id="COG0495">
    <property type="taxonomic scope" value="Bacteria"/>
</dbReference>
<dbReference type="HOGENOM" id="CLU_004427_0_0_7"/>
<dbReference type="OrthoDB" id="9810365at2"/>
<dbReference type="Proteomes" id="UP000007721">
    <property type="component" value="Chromosome"/>
</dbReference>
<dbReference type="GO" id="GO:0005829">
    <property type="term" value="C:cytosol"/>
    <property type="evidence" value="ECO:0007669"/>
    <property type="project" value="TreeGrafter"/>
</dbReference>
<dbReference type="GO" id="GO:0002161">
    <property type="term" value="F:aminoacyl-tRNA deacylase activity"/>
    <property type="evidence" value="ECO:0007669"/>
    <property type="project" value="InterPro"/>
</dbReference>
<dbReference type="GO" id="GO:0005524">
    <property type="term" value="F:ATP binding"/>
    <property type="evidence" value="ECO:0007669"/>
    <property type="project" value="UniProtKB-UniRule"/>
</dbReference>
<dbReference type="GO" id="GO:0004823">
    <property type="term" value="F:leucine-tRNA ligase activity"/>
    <property type="evidence" value="ECO:0007669"/>
    <property type="project" value="UniProtKB-UniRule"/>
</dbReference>
<dbReference type="GO" id="GO:0006429">
    <property type="term" value="P:leucyl-tRNA aminoacylation"/>
    <property type="evidence" value="ECO:0007669"/>
    <property type="project" value="UniProtKB-UniRule"/>
</dbReference>
<dbReference type="CDD" id="cd07958">
    <property type="entry name" value="Anticodon_Ia_Leu_BEm"/>
    <property type="match status" value="1"/>
</dbReference>
<dbReference type="CDD" id="cd00812">
    <property type="entry name" value="LeuRS_core"/>
    <property type="match status" value="1"/>
</dbReference>
<dbReference type="FunFam" id="3.10.20.590:FF:000001">
    <property type="entry name" value="Leucine--tRNA ligase"/>
    <property type="match status" value="1"/>
</dbReference>
<dbReference type="FunFam" id="3.40.50.620:FF:000003">
    <property type="entry name" value="Leucine--tRNA ligase"/>
    <property type="match status" value="1"/>
</dbReference>
<dbReference type="FunFam" id="3.40.50.620:FF:000212">
    <property type="entry name" value="Leucine--tRNA ligase"/>
    <property type="match status" value="1"/>
</dbReference>
<dbReference type="FunFam" id="1.10.730.10:FF:000011">
    <property type="entry name" value="Leucine--tRNA ligase chloroplastic/mitochondrial"/>
    <property type="match status" value="1"/>
</dbReference>
<dbReference type="Gene3D" id="3.10.20.590">
    <property type="match status" value="1"/>
</dbReference>
<dbReference type="Gene3D" id="3.40.50.620">
    <property type="entry name" value="HUPs"/>
    <property type="match status" value="2"/>
</dbReference>
<dbReference type="Gene3D" id="1.10.730.10">
    <property type="entry name" value="Isoleucyl-tRNA Synthetase, Domain 1"/>
    <property type="match status" value="1"/>
</dbReference>
<dbReference type="HAMAP" id="MF_00049_B">
    <property type="entry name" value="Leu_tRNA_synth_B"/>
    <property type="match status" value="1"/>
</dbReference>
<dbReference type="InterPro" id="IPR001412">
    <property type="entry name" value="aa-tRNA-synth_I_CS"/>
</dbReference>
<dbReference type="InterPro" id="IPR002300">
    <property type="entry name" value="aa-tRNA-synth_Ia"/>
</dbReference>
<dbReference type="InterPro" id="IPR002302">
    <property type="entry name" value="Leu-tRNA-ligase"/>
</dbReference>
<dbReference type="InterPro" id="IPR025709">
    <property type="entry name" value="Leu_tRNA-synth_edit"/>
</dbReference>
<dbReference type="InterPro" id="IPR013155">
    <property type="entry name" value="M/V/L/I-tRNA-synth_anticd-bd"/>
</dbReference>
<dbReference type="InterPro" id="IPR015413">
    <property type="entry name" value="Methionyl/Leucyl_tRNA_Synth"/>
</dbReference>
<dbReference type="InterPro" id="IPR014729">
    <property type="entry name" value="Rossmann-like_a/b/a_fold"/>
</dbReference>
<dbReference type="InterPro" id="IPR009080">
    <property type="entry name" value="tRNAsynth_Ia_anticodon-bd"/>
</dbReference>
<dbReference type="InterPro" id="IPR009008">
    <property type="entry name" value="Val/Leu/Ile-tRNA-synth_edit"/>
</dbReference>
<dbReference type="NCBIfam" id="TIGR00396">
    <property type="entry name" value="leuS_bact"/>
    <property type="match status" value="1"/>
</dbReference>
<dbReference type="PANTHER" id="PTHR43740:SF2">
    <property type="entry name" value="LEUCINE--TRNA LIGASE, MITOCHONDRIAL"/>
    <property type="match status" value="1"/>
</dbReference>
<dbReference type="PANTHER" id="PTHR43740">
    <property type="entry name" value="LEUCYL-TRNA SYNTHETASE"/>
    <property type="match status" value="1"/>
</dbReference>
<dbReference type="Pfam" id="PF08264">
    <property type="entry name" value="Anticodon_1"/>
    <property type="match status" value="1"/>
</dbReference>
<dbReference type="Pfam" id="PF00133">
    <property type="entry name" value="tRNA-synt_1"/>
    <property type="match status" value="1"/>
</dbReference>
<dbReference type="Pfam" id="PF13603">
    <property type="entry name" value="tRNA-synt_1_2"/>
    <property type="match status" value="1"/>
</dbReference>
<dbReference type="Pfam" id="PF09334">
    <property type="entry name" value="tRNA-synt_1g"/>
    <property type="match status" value="1"/>
</dbReference>
<dbReference type="PRINTS" id="PR00985">
    <property type="entry name" value="TRNASYNTHLEU"/>
</dbReference>
<dbReference type="SUPFAM" id="SSF47323">
    <property type="entry name" value="Anticodon-binding domain of a subclass of class I aminoacyl-tRNA synthetases"/>
    <property type="match status" value="1"/>
</dbReference>
<dbReference type="SUPFAM" id="SSF52374">
    <property type="entry name" value="Nucleotidylyl transferase"/>
    <property type="match status" value="1"/>
</dbReference>
<dbReference type="SUPFAM" id="SSF50677">
    <property type="entry name" value="ValRS/IleRS/LeuRS editing domain"/>
    <property type="match status" value="1"/>
</dbReference>
<dbReference type="PROSITE" id="PS00178">
    <property type="entry name" value="AA_TRNA_LIGASE_I"/>
    <property type="match status" value="1"/>
</dbReference>
<sequence>MEEKYVPARVEEKWQKLWDSNKSFKAEKVEGKSKYYLLEMFPYPSGRIHMGHVRNYSIGDVIARFKRMKGFNVLHPMGWDAFGMPAENAAIQHKSHPAKWTYENIDYMRGQLKKMGFSYDWDRELATCNVEYYKWEQLIFLQMLEKGLAYKKKSSVNWCPRCETVLANEQVEDGSCWRCDSLVEQKELEQWSFRITDYAEELLEDTYKLPGWPERVLTMQRNWIGRSTGCEIDFSIEGRKDAIKVFTTRQDTLFGATFMSLAPEHPLALQLTTAENMIVVNAFLDKVKKTDKIKRTAEDFEKEGVFTGSYCINPVTNRRMPIYLANFVLTDYGTGAVMAVPTHDQRDFEFARKYAIAMEVVIQPEGGSLDVATMTEAYTAEGIMVNSGRFDGLNSAVAKEQIADFLEQEGLGKKTVNFRLRDWGISRQRYWGNPIPVIYCDDCGAVPVPAKDLPVVLPMDATFTGEGGNPLSKIDSFIKTTCPLCGKDARRETDTMDTFVESSWYFLRYCCPDFACGPLDKGKTEYWMSVDQYIGGIEHAVMHLLYARFFTKVLRDLGYCDINEPFTNLLTQGMVIKDGSKMSKSKGNVVDPNALIEKYGADTARLFSLFAAPPEKDLDWSDQGVDGSYRFLNRVWKLVYECLPLISATGPLDAAALTDEGKTLRRLVHKTIRKVSDDIEDRFHFNTAIAAIMEMVNAIQAFEPKNQPRNVPVLKEAVESVVLLLAPFVPHFAEELWESLGHEDNLNEAAWPAFDAAAAVDEELLVVVQVNGKLRGKVTVAASATDEDIKGAVLADEKIRQLIDGMNIKKIVYVPGKLVNIVVG</sequence>
<proteinExistence type="inferred from homology"/>
<gene>
    <name evidence="1" type="primary">leuS</name>
    <name type="ordered locus">Geob_2171</name>
</gene>
<keyword id="KW-0030">Aminoacyl-tRNA synthetase</keyword>
<keyword id="KW-0067">ATP-binding</keyword>
<keyword id="KW-0963">Cytoplasm</keyword>
<keyword id="KW-0436">Ligase</keyword>
<keyword id="KW-0547">Nucleotide-binding</keyword>
<keyword id="KW-0648">Protein biosynthesis</keyword>
<keyword id="KW-1185">Reference proteome</keyword>
<name>SYL_GEODF</name>
<organism>
    <name type="scientific">Geotalea daltonii (strain DSM 22248 / JCM 15807 / FRC-32)</name>
    <name type="common">Geobacter daltonii</name>
    <dbReference type="NCBI Taxonomy" id="316067"/>
    <lineage>
        <taxon>Bacteria</taxon>
        <taxon>Pseudomonadati</taxon>
        <taxon>Thermodesulfobacteriota</taxon>
        <taxon>Desulfuromonadia</taxon>
        <taxon>Geobacterales</taxon>
        <taxon>Geobacteraceae</taxon>
        <taxon>Geotalea</taxon>
    </lineage>
</organism>
<feature type="chain" id="PRO_1000199208" description="Leucine--tRNA ligase">
    <location>
        <begin position="1"/>
        <end position="824"/>
    </location>
</feature>
<feature type="short sequence motif" description="'HIGH' region">
    <location>
        <begin position="42"/>
        <end position="52"/>
    </location>
</feature>
<feature type="short sequence motif" description="'KMSKS' region">
    <location>
        <begin position="581"/>
        <end position="585"/>
    </location>
</feature>
<feature type="binding site" evidence="1">
    <location>
        <position position="584"/>
    </location>
    <ligand>
        <name>ATP</name>
        <dbReference type="ChEBI" id="CHEBI:30616"/>
    </ligand>
</feature>
<reference key="1">
    <citation type="submission" date="2009-01" db="EMBL/GenBank/DDBJ databases">
        <title>Complete sequence of Geobacter sp. FRC-32.</title>
        <authorList>
            <consortium name="US DOE Joint Genome Institute"/>
            <person name="Lucas S."/>
            <person name="Copeland A."/>
            <person name="Lapidus A."/>
            <person name="Glavina del Rio T."/>
            <person name="Dalin E."/>
            <person name="Tice H."/>
            <person name="Bruce D."/>
            <person name="Goodwin L."/>
            <person name="Pitluck S."/>
            <person name="Saunders E."/>
            <person name="Brettin T."/>
            <person name="Detter J.C."/>
            <person name="Han C."/>
            <person name="Larimer F."/>
            <person name="Land M."/>
            <person name="Hauser L."/>
            <person name="Kyrpides N."/>
            <person name="Ovchinnikova G."/>
            <person name="Kostka J."/>
            <person name="Richardson P."/>
        </authorList>
    </citation>
    <scope>NUCLEOTIDE SEQUENCE [LARGE SCALE GENOMIC DNA]</scope>
    <source>
        <strain>DSM 22248 / JCM 15807 / FRC-32</strain>
    </source>
</reference>
<comment type="catalytic activity">
    <reaction evidence="1">
        <text>tRNA(Leu) + L-leucine + ATP = L-leucyl-tRNA(Leu) + AMP + diphosphate</text>
        <dbReference type="Rhea" id="RHEA:11688"/>
        <dbReference type="Rhea" id="RHEA-COMP:9613"/>
        <dbReference type="Rhea" id="RHEA-COMP:9622"/>
        <dbReference type="ChEBI" id="CHEBI:30616"/>
        <dbReference type="ChEBI" id="CHEBI:33019"/>
        <dbReference type="ChEBI" id="CHEBI:57427"/>
        <dbReference type="ChEBI" id="CHEBI:78442"/>
        <dbReference type="ChEBI" id="CHEBI:78494"/>
        <dbReference type="ChEBI" id="CHEBI:456215"/>
        <dbReference type="EC" id="6.1.1.4"/>
    </reaction>
</comment>
<comment type="subcellular location">
    <subcellularLocation>
        <location evidence="1">Cytoplasm</location>
    </subcellularLocation>
</comment>
<comment type="similarity">
    <text evidence="1">Belongs to the class-I aminoacyl-tRNA synthetase family.</text>
</comment>
<protein>
    <recommendedName>
        <fullName evidence="1">Leucine--tRNA ligase</fullName>
        <ecNumber evidence="1">6.1.1.4</ecNumber>
    </recommendedName>
    <alternativeName>
        <fullName evidence="1">Leucyl-tRNA synthetase</fullName>
        <shortName evidence="1">LeuRS</shortName>
    </alternativeName>
</protein>
<evidence type="ECO:0000255" key="1">
    <source>
        <dbReference type="HAMAP-Rule" id="MF_00049"/>
    </source>
</evidence>